<keyword id="KW-1003">Cell membrane</keyword>
<keyword id="KW-0285">Flavoprotein</keyword>
<keyword id="KW-0288">FMN</keyword>
<keyword id="KW-0472">Membrane</keyword>
<keyword id="KW-0560">Oxidoreductase</keyword>
<keyword id="KW-0665">Pyrimidine biosynthesis</keyword>
<accession>Q5N2Q8</accession>
<protein>
    <recommendedName>
        <fullName evidence="1">Dihydroorotate dehydrogenase (quinone)</fullName>
        <ecNumber evidence="1">1.3.5.2</ecNumber>
    </recommendedName>
    <alternativeName>
        <fullName evidence="1">DHOdehase</fullName>
        <shortName evidence="1">DHOD</shortName>
        <shortName evidence="1">DHODase</shortName>
    </alternativeName>
    <alternativeName>
        <fullName evidence="1">Dihydroorotate oxidase</fullName>
    </alternativeName>
</protein>
<gene>
    <name evidence="1" type="primary">pyrD</name>
    <name type="ordered locus">syc1222_c</name>
</gene>
<dbReference type="EC" id="1.3.5.2" evidence="1"/>
<dbReference type="EMBL" id="AP008231">
    <property type="protein sequence ID" value="BAD79412.1"/>
    <property type="molecule type" value="Genomic_DNA"/>
</dbReference>
<dbReference type="RefSeq" id="WP_011243534.1">
    <property type="nucleotide sequence ID" value="NC_006576.1"/>
</dbReference>
<dbReference type="SMR" id="Q5N2Q8"/>
<dbReference type="KEGG" id="syc:syc1222_c"/>
<dbReference type="eggNOG" id="COG0167">
    <property type="taxonomic scope" value="Bacteria"/>
</dbReference>
<dbReference type="UniPathway" id="UPA00070">
    <property type="reaction ID" value="UER00946"/>
</dbReference>
<dbReference type="Proteomes" id="UP000001175">
    <property type="component" value="Chromosome"/>
</dbReference>
<dbReference type="GO" id="GO:0005737">
    <property type="term" value="C:cytoplasm"/>
    <property type="evidence" value="ECO:0007669"/>
    <property type="project" value="InterPro"/>
</dbReference>
<dbReference type="GO" id="GO:0005886">
    <property type="term" value="C:plasma membrane"/>
    <property type="evidence" value="ECO:0007669"/>
    <property type="project" value="UniProtKB-SubCell"/>
</dbReference>
<dbReference type="GO" id="GO:0106430">
    <property type="term" value="F:dihydroorotate dehydrogenase (quinone) activity"/>
    <property type="evidence" value="ECO:0007669"/>
    <property type="project" value="UniProtKB-EC"/>
</dbReference>
<dbReference type="GO" id="GO:0006207">
    <property type="term" value="P:'de novo' pyrimidine nucleobase biosynthetic process"/>
    <property type="evidence" value="ECO:0007669"/>
    <property type="project" value="InterPro"/>
</dbReference>
<dbReference type="GO" id="GO:0044205">
    <property type="term" value="P:'de novo' UMP biosynthetic process"/>
    <property type="evidence" value="ECO:0007669"/>
    <property type="project" value="UniProtKB-UniRule"/>
</dbReference>
<dbReference type="CDD" id="cd04738">
    <property type="entry name" value="DHOD_2_like"/>
    <property type="match status" value="1"/>
</dbReference>
<dbReference type="Gene3D" id="3.20.20.70">
    <property type="entry name" value="Aldolase class I"/>
    <property type="match status" value="1"/>
</dbReference>
<dbReference type="HAMAP" id="MF_00225">
    <property type="entry name" value="DHO_dh_type2"/>
    <property type="match status" value="1"/>
</dbReference>
<dbReference type="InterPro" id="IPR013785">
    <property type="entry name" value="Aldolase_TIM"/>
</dbReference>
<dbReference type="InterPro" id="IPR050074">
    <property type="entry name" value="DHO_dehydrogenase"/>
</dbReference>
<dbReference type="InterPro" id="IPR005719">
    <property type="entry name" value="Dihydroorotate_DH_2"/>
</dbReference>
<dbReference type="InterPro" id="IPR005720">
    <property type="entry name" value="Dihydroorotate_DH_cat"/>
</dbReference>
<dbReference type="InterPro" id="IPR001295">
    <property type="entry name" value="Dihydroorotate_DH_CS"/>
</dbReference>
<dbReference type="NCBIfam" id="NF003651">
    <property type="entry name" value="PRK05286.2-4"/>
    <property type="match status" value="1"/>
</dbReference>
<dbReference type="NCBIfam" id="NF003652">
    <property type="entry name" value="PRK05286.2-5"/>
    <property type="match status" value="1"/>
</dbReference>
<dbReference type="NCBIfam" id="TIGR01036">
    <property type="entry name" value="pyrD_sub2"/>
    <property type="match status" value="1"/>
</dbReference>
<dbReference type="PANTHER" id="PTHR48109:SF4">
    <property type="entry name" value="DIHYDROOROTATE DEHYDROGENASE (QUINONE), MITOCHONDRIAL"/>
    <property type="match status" value="1"/>
</dbReference>
<dbReference type="PANTHER" id="PTHR48109">
    <property type="entry name" value="DIHYDROOROTATE DEHYDROGENASE (QUINONE), MITOCHONDRIAL-RELATED"/>
    <property type="match status" value="1"/>
</dbReference>
<dbReference type="Pfam" id="PF01180">
    <property type="entry name" value="DHO_dh"/>
    <property type="match status" value="1"/>
</dbReference>
<dbReference type="SUPFAM" id="SSF51395">
    <property type="entry name" value="FMN-linked oxidoreductases"/>
    <property type="match status" value="1"/>
</dbReference>
<dbReference type="PROSITE" id="PS00911">
    <property type="entry name" value="DHODEHASE_1"/>
    <property type="match status" value="1"/>
</dbReference>
<dbReference type="PROSITE" id="PS00912">
    <property type="entry name" value="DHODEHASE_2"/>
    <property type="match status" value="1"/>
</dbReference>
<evidence type="ECO:0000255" key="1">
    <source>
        <dbReference type="HAMAP-Rule" id="MF_00225"/>
    </source>
</evidence>
<organism>
    <name type="scientific">Synechococcus sp. (strain ATCC 27144 / PCC 6301 / SAUG 1402/1)</name>
    <name type="common">Anacystis nidulans</name>
    <dbReference type="NCBI Taxonomy" id="269084"/>
    <lineage>
        <taxon>Bacteria</taxon>
        <taxon>Bacillati</taxon>
        <taxon>Cyanobacteriota</taxon>
        <taxon>Cyanophyceae</taxon>
        <taxon>Synechococcales</taxon>
        <taxon>Synechococcaceae</taxon>
        <taxon>Synechococcus</taxon>
    </lineage>
</organism>
<comment type="function">
    <text evidence="1">Catalyzes the conversion of dihydroorotate to orotate with quinone as electron acceptor.</text>
</comment>
<comment type="catalytic activity">
    <reaction evidence="1">
        <text>(S)-dihydroorotate + a quinone = orotate + a quinol</text>
        <dbReference type="Rhea" id="RHEA:30187"/>
        <dbReference type="ChEBI" id="CHEBI:24646"/>
        <dbReference type="ChEBI" id="CHEBI:30839"/>
        <dbReference type="ChEBI" id="CHEBI:30864"/>
        <dbReference type="ChEBI" id="CHEBI:132124"/>
        <dbReference type="EC" id="1.3.5.2"/>
    </reaction>
</comment>
<comment type="cofactor">
    <cofactor evidence="1">
        <name>FMN</name>
        <dbReference type="ChEBI" id="CHEBI:58210"/>
    </cofactor>
    <text evidence="1">Binds 1 FMN per subunit.</text>
</comment>
<comment type="pathway">
    <text evidence="1">Pyrimidine metabolism; UMP biosynthesis via de novo pathway; orotate from (S)-dihydroorotate (quinone route): step 1/1.</text>
</comment>
<comment type="subunit">
    <text evidence="1">Monomer.</text>
</comment>
<comment type="subcellular location">
    <subcellularLocation>
        <location evidence="1">Cell membrane</location>
        <topology evidence="1">Peripheral membrane protein</topology>
    </subcellularLocation>
</comment>
<comment type="similarity">
    <text evidence="1">Belongs to the dihydroorotate dehydrogenase family. Type 2 subfamily.</text>
</comment>
<proteinExistence type="inferred from homology"/>
<name>PYRD_SYNP6</name>
<sequence>MDFYRPLLRPLLLSQLNVDPEWLTRNALGFLATLARSRSPLAANLRSYLRQTYGFQDPRLAMSLWGLTFATPVGLAAGFDKDGIAAPLWSDLGFGFAELGTVTALAQPGNPRPRLFRIPQDLAAFNRMGFNNASAEALADTLRGYFPEGQRSIPIGINLGKSKLTPLSGAVSDYVSSFRSLRSLGDYFVVNVSSPNTPGLRSLQAVTELEPILAALQAENTEQRPLLLKIAPDLVDEEVVAIAHLAQRQQLAGIIATNTTIDKSLLSVEHLPGRREPLATEAGGISGAPLRSRSTEVIRLLHRTTQGQLPIIGVGGIFSAEDAWQKIVAGASLVQVYTGWVYEGPLLVKTIQQGLLERLDSAGLPNLAAAVGSAAIDS</sequence>
<feature type="chain" id="PRO_0000148479" description="Dihydroorotate dehydrogenase (quinone)">
    <location>
        <begin position="1"/>
        <end position="378"/>
    </location>
</feature>
<feature type="active site" description="Nucleophile" evidence="1">
    <location>
        <position position="194"/>
    </location>
</feature>
<feature type="binding site" evidence="1">
    <location>
        <begin position="77"/>
        <end position="81"/>
    </location>
    <ligand>
        <name>FMN</name>
        <dbReference type="ChEBI" id="CHEBI:58210"/>
    </ligand>
</feature>
<feature type="binding site" evidence="1">
    <location>
        <position position="81"/>
    </location>
    <ligand>
        <name>substrate</name>
    </ligand>
</feature>
<feature type="binding site" evidence="1">
    <location>
        <position position="101"/>
    </location>
    <ligand>
        <name>FMN</name>
        <dbReference type="ChEBI" id="CHEBI:58210"/>
    </ligand>
</feature>
<feature type="binding site" evidence="1">
    <location>
        <begin position="126"/>
        <end position="130"/>
    </location>
    <ligand>
        <name>substrate</name>
    </ligand>
</feature>
<feature type="binding site" evidence="1">
    <location>
        <position position="158"/>
    </location>
    <ligand>
        <name>FMN</name>
        <dbReference type="ChEBI" id="CHEBI:58210"/>
    </ligand>
</feature>
<feature type="binding site" evidence="1">
    <location>
        <position position="191"/>
    </location>
    <ligand>
        <name>FMN</name>
        <dbReference type="ChEBI" id="CHEBI:58210"/>
    </ligand>
</feature>
<feature type="binding site" evidence="1">
    <location>
        <position position="191"/>
    </location>
    <ligand>
        <name>substrate</name>
    </ligand>
</feature>
<feature type="binding site" evidence="1">
    <location>
        <position position="196"/>
    </location>
    <ligand>
        <name>substrate</name>
    </ligand>
</feature>
<feature type="binding site" evidence="1">
    <location>
        <position position="229"/>
    </location>
    <ligand>
        <name>FMN</name>
        <dbReference type="ChEBI" id="CHEBI:58210"/>
    </ligand>
</feature>
<feature type="binding site" evidence="1">
    <location>
        <position position="257"/>
    </location>
    <ligand>
        <name>FMN</name>
        <dbReference type="ChEBI" id="CHEBI:58210"/>
    </ligand>
</feature>
<feature type="binding site" evidence="1">
    <location>
        <begin position="258"/>
        <end position="259"/>
    </location>
    <ligand>
        <name>substrate</name>
    </ligand>
</feature>
<feature type="binding site" evidence="1">
    <location>
        <position position="287"/>
    </location>
    <ligand>
        <name>FMN</name>
        <dbReference type="ChEBI" id="CHEBI:58210"/>
    </ligand>
</feature>
<feature type="binding site" evidence="1">
    <location>
        <position position="316"/>
    </location>
    <ligand>
        <name>FMN</name>
        <dbReference type="ChEBI" id="CHEBI:58210"/>
    </ligand>
</feature>
<feature type="binding site" evidence="1">
    <location>
        <begin position="337"/>
        <end position="338"/>
    </location>
    <ligand>
        <name>FMN</name>
        <dbReference type="ChEBI" id="CHEBI:58210"/>
    </ligand>
</feature>
<reference key="1">
    <citation type="journal article" date="2007" name="Photosyn. Res.">
        <title>Complete nucleotide sequence of the freshwater unicellular cyanobacterium Synechococcus elongatus PCC 6301 chromosome: gene content and organization.</title>
        <authorList>
            <person name="Sugita C."/>
            <person name="Ogata K."/>
            <person name="Shikata M."/>
            <person name="Jikuya H."/>
            <person name="Takano J."/>
            <person name="Furumichi M."/>
            <person name="Kanehisa M."/>
            <person name="Omata T."/>
            <person name="Sugiura M."/>
            <person name="Sugita M."/>
        </authorList>
    </citation>
    <scope>NUCLEOTIDE SEQUENCE [LARGE SCALE GENOMIC DNA]</scope>
    <source>
        <strain>ATCC 27144 / PCC 6301 / SAUG 1402/1</strain>
    </source>
</reference>